<keyword id="KW-0150">Chloroplast</keyword>
<keyword id="KW-0934">Plastid</keyword>
<keyword id="KW-0687">Ribonucleoprotein</keyword>
<keyword id="KW-0689">Ribosomal protein</keyword>
<keyword id="KW-0694">RNA-binding</keyword>
<keyword id="KW-0699">rRNA-binding</keyword>
<protein>
    <recommendedName>
        <fullName evidence="2">Small ribosomal subunit protein uS8c</fullName>
    </recommendedName>
    <alternativeName>
        <fullName>30S ribosomal protein S8, chloroplastic</fullName>
    </alternativeName>
</protein>
<geneLocation type="chloroplast"/>
<name>RR8_GRATL</name>
<reference key="1">
    <citation type="journal article" date="2004" name="J. Mol. Evol.">
        <title>Comparative analysis of the complete plastid genome sequence of the red alga Gracilaria tenuistipitata var. liui provides insights into the evolution of rhodoplasts and their relationship to other plastids.</title>
        <authorList>
            <person name="Hagopian J.C."/>
            <person name="Reis M."/>
            <person name="Kitajima J.P."/>
            <person name="Bhattacharya D."/>
            <person name="de Oliveira M.C."/>
        </authorList>
    </citation>
    <scope>NUCLEOTIDE SEQUENCE [LARGE SCALE GENOMIC DNA]</scope>
</reference>
<accession>Q6B8W6</accession>
<evidence type="ECO:0000250" key="1"/>
<evidence type="ECO:0000305" key="2"/>
<dbReference type="EMBL" id="AY673996">
    <property type="protein sequence ID" value="AAT79669.1"/>
    <property type="molecule type" value="Genomic_DNA"/>
</dbReference>
<dbReference type="RefSeq" id="YP_063594.1">
    <property type="nucleotide sequence ID" value="NC_006137.1"/>
</dbReference>
<dbReference type="SMR" id="Q6B8W6"/>
<dbReference type="GeneID" id="2944037"/>
<dbReference type="GO" id="GO:0009507">
    <property type="term" value="C:chloroplast"/>
    <property type="evidence" value="ECO:0007669"/>
    <property type="project" value="UniProtKB-SubCell"/>
</dbReference>
<dbReference type="GO" id="GO:1990904">
    <property type="term" value="C:ribonucleoprotein complex"/>
    <property type="evidence" value="ECO:0007669"/>
    <property type="project" value="UniProtKB-KW"/>
</dbReference>
<dbReference type="GO" id="GO:0005840">
    <property type="term" value="C:ribosome"/>
    <property type="evidence" value="ECO:0007669"/>
    <property type="project" value="UniProtKB-KW"/>
</dbReference>
<dbReference type="GO" id="GO:0019843">
    <property type="term" value="F:rRNA binding"/>
    <property type="evidence" value="ECO:0007669"/>
    <property type="project" value="UniProtKB-UniRule"/>
</dbReference>
<dbReference type="GO" id="GO:0003735">
    <property type="term" value="F:structural constituent of ribosome"/>
    <property type="evidence" value="ECO:0007669"/>
    <property type="project" value="InterPro"/>
</dbReference>
<dbReference type="GO" id="GO:0006412">
    <property type="term" value="P:translation"/>
    <property type="evidence" value="ECO:0007669"/>
    <property type="project" value="UniProtKB-UniRule"/>
</dbReference>
<dbReference type="FunFam" id="3.30.1370.30:FF:000002">
    <property type="entry name" value="30S ribosomal protein S8"/>
    <property type="match status" value="1"/>
</dbReference>
<dbReference type="FunFam" id="3.30.1490.10:FF:000001">
    <property type="entry name" value="30S ribosomal protein S8"/>
    <property type="match status" value="1"/>
</dbReference>
<dbReference type="Gene3D" id="3.30.1370.30">
    <property type="match status" value="1"/>
</dbReference>
<dbReference type="Gene3D" id="3.30.1490.10">
    <property type="match status" value="1"/>
</dbReference>
<dbReference type="HAMAP" id="MF_01302_B">
    <property type="entry name" value="Ribosomal_uS8_B"/>
    <property type="match status" value="1"/>
</dbReference>
<dbReference type="InterPro" id="IPR000630">
    <property type="entry name" value="Ribosomal_uS8"/>
</dbReference>
<dbReference type="InterPro" id="IPR047863">
    <property type="entry name" value="Ribosomal_uS8_CS"/>
</dbReference>
<dbReference type="InterPro" id="IPR035987">
    <property type="entry name" value="Ribosomal_uS8_sf"/>
</dbReference>
<dbReference type="NCBIfam" id="NF001109">
    <property type="entry name" value="PRK00136.1"/>
    <property type="match status" value="1"/>
</dbReference>
<dbReference type="PANTHER" id="PTHR11758">
    <property type="entry name" value="40S RIBOSOMAL PROTEIN S15A"/>
    <property type="match status" value="1"/>
</dbReference>
<dbReference type="Pfam" id="PF00410">
    <property type="entry name" value="Ribosomal_S8"/>
    <property type="match status" value="1"/>
</dbReference>
<dbReference type="SUPFAM" id="SSF56047">
    <property type="entry name" value="Ribosomal protein S8"/>
    <property type="match status" value="1"/>
</dbReference>
<dbReference type="PROSITE" id="PS00053">
    <property type="entry name" value="RIBOSOMAL_S8"/>
    <property type="match status" value="1"/>
</dbReference>
<sequence length="132" mass="15047">MINDTIADMLTRIRNANLAKHQIVQVCSTKMTRNIIKVLQEEGFIYKFEEIGEDNNKYLLISLKYKGKRKKPVITSLKRISKPGLRVYANYKELPKVLGGIGIAIISTSKGVMSDYHARHYGLGGEILCYIW</sequence>
<comment type="function">
    <text evidence="1">One of the primary rRNA binding proteins, it binds directly to 16S rRNA central domain where it helps coordinate assembly of the platform of the 30S subunit.</text>
</comment>
<comment type="subunit">
    <text evidence="1">Part of the 30S ribosomal subunit.</text>
</comment>
<comment type="subcellular location">
    <subcellularLocation>
        <location>Plastid</location>
        <location>Chloroplast</location>
    </subcellularLocation>
</comment>
<comment type="similarity">
    <text evidence="2">Belongs to the universal ribosomal protein uS8 family.</text>
</comment>
<feature type="chain" id="PRO_0000126571" description="Small ribosomal subunit protein uS8c">
    <location>
        <begin position="1"/>
        <end position="132"/>
    </location>
</feature>
<organism>
    <name type="scientific">Gracilaria tenuistipitata var. liui</name>
    <name type="common">Red alga</name>
    <dbReference type="NCBI Taxonomy" id="285951"/>
    <lineage>
        <taxon>Eukaryota</taxon>
        <taxon>Rhodophyta</taxon>
        <taxon>Florideophyceae</taxon>
        <taxon>Rhodymeniophycidae</taxon>
        <taxon>Gracilariales</taxon>
        <taxon>Gracilariaceae</taxon>
        <taxon>Gracilaria</taxon>
        <taxon>Gracilaria tenuistipitata</taxon>
    </lineage>
</organism>
<gene>
    <name type="primary">rps8</name>
    <name type="ordered locus">Grc000088</name>
</gene>
<proteinExistence type="inferred from homology"/>